<feature type="chain" id="PRO_0000062862" description="Octanoyltransferase">
    <location>
        <begin position="1"/>
        <end position="120" status="greater than"/>
    </location>
</feature>
<feature type="domain" description="BPL/LPL catalytic" evidence="2">
    <location>
        <begin position="8"/>
        <end position="120"/>
    </location>
</feature>
<feature type="region of interest" description="Disordered" evidence="3">
    <location>
        <begin position="42"/>
        <end position="68"/>
    </location>
</feature>
<feature type="binding site" evidence="1">
    <location>
        <begin position="68"/>
        <end position="75"/>
    </location>
    <ligand>
        <name>substrate</name>
    </ligand>
</feature>
<feature type="non-terminal residue">
    <location>
        <position position="120"/>
    </location>
</feature>
<accession>Q51854</accession>
<evidence type="ECO:0000250" key="1"/>
<evidence type="ECO:0000255" key="2">
    <source>
        <dbReference type="PROSITE-ProRule" id="PRU01067"/>
    </source>
</evidence>
<evidence type="ECO:0000256" key="3">
    <source>
        <dbReference type="SAM" id="MobiDB-lite"/>
    </source>
</evidence>
<evidence type="ECO:0000305" key="4"/>
<sequence>MADRQRDPDLADTLLLLEHPPVYTLGRGSSLDFIKFTPPASFTAGVTPSSRAEPTPPQPGPELHRTERGGEVTYHCPGQLVGYPILNLRRLSADLHWYLRQLEEYLIRVLDHYGLRGERI</sequence>
<dbReference type="EC" id="2.3.1.181"/>
<dbReference type="EMBL" id="U60114">
    <property type="protein sequence ID" value="AAB03332.1"/>
    <property type="molecule type" value="Genomic_DNA"/>
</dbReference>
<dbReference type="SMR" id="Q51854"/>
<dbReference type="UniPathway" id="UPA00538">
    <property type="reaction ID" value="UER00592"/>
</dbReference>
<dbReference type="GO" id="GO:0005737">
    <property type="term" value="C:cytoplasm"/>
    <property type="evidence" value="ECO:0007669"/>
    <property type="project" value="UniProtKB-SubCell"/>
</dbReference>
<dbReference type="GO" id="GO:0033819">
    <property type="term" value="F:lipoyl(octanoyl) transferase activity"/>
    <property type="evidence" value="ECO:0007669"/>
    <property type="project" value="UniProtKB-EC"/>
</dbReference>
<dbReference type="GO" id="GO:0036211">
    <property type="term" value="P:protein modification process"/>
    <property type="evidence" value="ECO:0007669"/>
    <property type="project" value="InterPro"/>
</dbReference>
<dbReference type="Gene3D" id="3.30.930.10">
    <property type="entry name" value="Bira Bifunctional Protein, Domain 2"/>
    <property type="match status" value="1"/>
</dbReference>
<dbReference type="InterPro" id="IPR045864">
    <property type="entry name" value="aa-tRNA-synth_II/BPL/LPL"/>
</dbReference>
<dbReference type="InterPro" id="IPR004143">
    <property type="entry name" value="BPL_LPL_catalytic"/>
</dbReference>
<dbReference type="InterPro" id="IPR000544">
    <property type="entry name" value="Octanoyltransferase"/>
</dbReference>
<dbReference type="InterPro" id="IPR020605">
    <property type="entry name" value="Octanoyltransferase_CS"/>
</dbReference>
<dbReference type="NCBIfam" id="TIGR00214">
    <property type="entry name" value="lipB"/>
    <property type="match status" value="1"/>
</dbReference>
<dbReference type="PANTHER" id="PTHR10993:SF7">
    <property type="entry name" value="LIPOYLTRANSFERASE 2, MITOCHONDRIAL-RELATED"/>
    <property type="match status" value="1"/>
</dbReference>
<dbReference type="PANTHER" id="PTHR10993">
    <property type="entry name" value="OCTANOYLTRANSFERASE"/>
    <property type="match status" value="1"/>
</dbReference>
<dbReference type="Pfam" id="PF21948">
    <property type="entry name" value="LplA-B_cat"/>
    <property type="match status" value="1"/>
</dbReference>
<dbReference type="PIRSF" id="PIRSF016262">
    <property type="entry name" value="LPLase"/>
    <property type="match status" value="1"/>
</dbReference>
<dbReference type="SUPFAM" id="SSF55681">
    <property type="entry name" value="Class II aaRS and biotin synthetases"/>
    <property type="match status" value="1"/>
</dbReference>
<dbReference type="PROSITE" id="PS51733">
    <property type="entry name" value="BPL_LPL_CATALYTIC"/>
    <property type="match status" value="1"/>
</dbReference>
<dbReference type="PROSITE" id="PS01313">
    <property type="entry name" value="LIPB"/>
    <property type="match status" value="1"/>
</dbReference>
<comment type="function">
    <text evidence="1">Catalyzes the transfer of endogenously produced octanoic acid from octanoyl-acyl-carrier-protein onto the lipoyl domains of lipoate-dependent enzymes. Lipoyl-ACP can also act as a substrate although octanoyl-ACP is likely to be the physiological substrate (By similarity).</text>
</comment>
<comment type="catalytic activity">
    <reaction>
        <text>octanoyl-[ACP] + L-lysyl-[protein] = N(6)-octanoyl-L-lysyl-[protein] + holo-[ACP] + H(+)</text>
        <dbReference type="Rhea" id="RHEA:17665"/>
        <dbReference type="Rhea" id="RHEA-COMP:9636"/>
        <dbReference type="Rhea" id="RHEA-COMP:9685"/>
        <dbReference type="Rhea" id="RHEA-COMP:9752"/>
        <dbReference type="Rhea" id="RHEA-COMP:9928"/>
        <dbReference type="ChEBI" id="CHEBI:15378"/>
        <dbReference type="ChEBI" id="CHEBI:29969"/>
        <dbReference type="ChEBI" id="CHEBI:64479"/>
        <dbReference type="ChEBI" id="CHEBI:78463"/>
        <dbReference type="ChEBI" id="CHEBI:78809"/>
        <dbReference type="EC" id="2.3.1.181"/>
    </reaction>
</comment>
<comment type="pathway">
    <text>Protein modification; protein lipoylation via endogenous pathway; protein N(6)-(lipoyl)lysine from octanoyl-[acyl-carrier-protein]: step 1/2.</text>
</comment>
<comment type="subcellular location">
    <subcellularLocation>
        <location evidence="1">Cytoplasm</location>
    </subcellularLocation>
</comment>
<comment type="miscellaneous">
    <text evidence="1">In the reaction, the free carboxyl group of octanoic acid is attached via an amide linkage to the epsilon-amino group of a specific lysine residue of lipoyl domains of lipoate-dependent enzymes.</text>
</comment>
<comment type="similarity">
    <text evidence="4">Belongs to the LipB family.</text>
</comment>
<gene>
    <name type="primary">lipB</name>
</gene>
<proteinExistence type="inferred from homology"/>
<name>LIPB_PROHO</name>
<protein>
    <recommendedName>
        <fullName>Octanoyltransferase</fullName>
        <ecNumber>2.3.1.181</ecNumber>
    </recommendedName>
    <alternativeName>
        <fullName>Lipoate-protein ligase B</fullName>
    </alternativeName>
    <alternativeName>
        <fullName>Lipoyl/octanoyl transferase</fullName>
    </alternativeName>
    <alternativeName>
        <fullName>Octanoyl-[acyl-carrier-protein]-protein N-octanoyltransferase</fullName>
    </alternativeName>
</protein>
<organism>
    <name type="scientific">Prochlorothrix hollandica</name>
    <dbReference type="NCBI Taxonomy" id="1223"/>
    <lineage>
        <taxon>Bacteria</taxon>
        <taxon>Bacillati</taxon>
        <taxon>Cyanobacteriota</taxon>
        <taxon>Cyanophyceae</taxon>
        <taxon>Prochlorotrichales</taxon>
        <taxon>Prochlorotrichaceae</taxon>
        <taxon>Prochlorothrix</taxon>
    </lineage>
</organism>
<reference key="1">
    <citation type="submission" date="1996-06" db="EMBL/GenBank/DDBJ databases">
        <authorList>
            <person name="Arudchandran A."/>
            <person name="Bullerjahn G.S."/>
        </authorList>
    </citation>
    <scope>NUCLEOTIDE SEQUENCE [GENOMIC DNA]</scope>
    <source>
        <strain>CCAP 1490/1 / SAG 10.89 / ACC 15-2</strain>
    </source>
</reference>
<keyword id="KW-0012">Acyltransferase</keyword>
<keyword id="KW-0963">Cytoplasm</keyword>
<keyword id="KW-0808">Transferase</keyword>